<organism>
    <name type="scientific">Mycoplasmopsis pulmonis (strain UAB CTIP)</name>
    <name type="common">Mycoplasma pulmonis</name>
    <dbReference type="NCBI Taxonomy" id="272635"/>
    <lineage>
        <taxon>Bacteria</taxon>
        <taxon>Bacillati</taxon>
        <taxon>Mycoplasmatota</taxon>
        <taxon>Mycoplasmoidales</taxon>
        <taxon>Metamycoplasmataceae</taxon>
        <taxon>Mycoplasmopsis</taxon>
    </lineage>
</organism>
<protein>
    <recommendedName>
        <fullName evidence="1">Chaperone protein DnaK</fullName>
    </recommendedName>
    <alternativeName>
        <fullName evidence="1">HSP70</fullName>
    </alternativeName>
    <alternativeName>
        <fullName evidence="1">Heat shock 70 kDa protein</fullName>
    </alternativeName>
    <alternativeName>
        <fullName evidence="1">Heat shock protein 70</fullName>
    </alternativeName>
</protein>
<gene>
    <name evidence="1" type="primary">dnaK</name>
    <name type="ordered locus">MYPU_2230</name>
</gene>
<keyword id="KW-0067">ATP-binding</keyword>
<keyword id="KW-0143">Chaperone</keyword>
<keyword id="KW-0547">Nucleotide-binding</keyword>
<keyword id="KW-0597">Phosphoprotein</keyword>
<keyword id="KW-1185">Reference proteome</keyword>
<keyword id="KW-0346">Stress response</keyword>
<reference key="1">
    <citation type="journal article" date="2001" name="Nucleic Acids Res.">
        <title>The complete genome sequence of the murine respiratory pathogen Mycoplasma pulmonis.</title>
        <authorList>
            <person name="Chambaud I."/>
            <person name="Heilig R."/>
            <person name="Ferris S."/>
            <person name="Barbe V."/>
            <person name="Samson D."/>
            <person name="Galisson F."/>
            <person name="Moszer I."/>
            <person name="Dybvig K."/>
            <person name="Wroblewski H."/>
            <person name="Viari A."/>
            <person name="Rocha E.P.C."/>
            <person name="Blanchard A."/>
        </authorList>
    </citation>
    <scope>NUCLEOTIDE SEQUENCE [LARGE SCALE GENOMIC DNA]</scope>
    <source>
        <strain>UAB CTIP</strain>
    </source>
</reference>
<dbReference type="EMBL" id="AL445563">
    <property type="protein sequence ID" value="CAC13396.1"/>
    <property type="molecule type" value="Genomic_DNA"/>
</dbReference>
<dbReference type="PIR" id="G90539">
    <property type="entry name" value="G90539"/>
</dbReference>
<dbReference type="RefSeq" id="WP_010925027.1">
    <property type="nucleotide sequence ID" value="NC_002771.1"/>
</dbReference>
<dbReference type="SMR" id="Q98QY7"/>
<dbReference type="STRING" id="272635.gene:17576810"/>
<dbReference type="KEGG" id="mpu:MYPU_2230"/>
<dbReference type="eggNOG" id="COG0443">
    <property type="taxonomic scope" value="Bacteria"/>
</dbReference>
<dbReference type="HOGENOM" id="CLU_005965_2_4_14"/>
<dbReference type="BioCyc" id="MPUL272635:G1GT6-222-MONOMER"/>
<dbReference type="Proteomes" id="UP000000528">
    <property type="component" value="Chromosome"/>
</dbReference>
<dbReference type="GO" id="GO:0005524">
    <property type="term" value="F:ATP binding"/>
    <property type="evidence" value="ECO:0007669"/>
    <property type="project" value="UniProtKB-UniRule"/>
</dbReference>
<dbReference type="GO" id="GO:0140662">
    <property type="term" value="F:ATP-dependent protein folding chaperone"/>
    <property type="evidence" value="ECO:0007669"/>
    <property type="project" value="InterPro"/>
</dbReference>
<dbReference type="GO" id="GO:0051082">
    <property type="term" value="F:unfolded protein binding"/>
    <property type="evidence" value="ECO:0007669"/>
    <property type="project" value="InterPro"/>
</dbReference>
<dbReference type="CDD" id="cd10234">
    <property type="entry name" value="ASKHA_NBD_HSP70_DnaK-like"/>
    <property type="match status" value="1"/>
</dbReference>
<dbReference type="FunFam" id="2.60.34.10:FF:000014">
    <property type="entry name" value="Chaperone protein DnaK HSP70"/>
    <property type="match status" value="1"/>
</dbReference>
<dbReference type="FunFam" id="3.30.420.40:FF:000071">
    <property type="entry name" value="Molecular chaperone DnaK"/>
    <property type="match status" value="1"/>
</dbReference>
<dbReference type="FunFam" id="3.90.640.10:FF:000003">
    <property type="entry name" value="Molecular chaperone DnaK"/>
    <property type="match status" value="1"/>
</dbReference>
<dbReference type="Gene3D" id="1.20.1270.10">
    <property type="match status" value="1"/>
</dbReference>
<dbReference type="Gene3D" id="3.30.420.40">
    <property type="match status" value="2"/>
</dbReference>
<dbReference type="Gene3D" id="3.90.640.10">
    <property type="entry name" value="Actin, Chain A, domain 4"/>
    <property type="match status" value="1"/>
</dbReference>
<dbReference type="Gene3D" id="2.60.34.10">
    <property type="entry name" value="Substrate Binding Domain Of DNAk, Chain A, domain 1"/>
    <property type="match status" value="1"/>
</dbReference>
<dbReference type="HAMAP" id="MF_00332">
    <property type="entry name" value="DnaK"/>
    <property type="match status" value="1"/>
</dbReference>
<dbReference type="InterPro" id="IPR043129">
    <property type="entry name" value="ATPase_NBD"/>
</dbReference>
<dbReference type="InterPro" id="IPR012725">
    <property type="entry name" value="Chaperone_DnaK"/>
</dbReference>
<dbReference type="InterPro" id="IPR018181">
    <property type="entry name" value="Heat_shock_70_CS"/>
</dbReference>
<dbReference type="InterPro" id="IPR029048">
    <property type="entry name" value="HSP70_C_sf"/>
</dbReference>
<dbReference type="InterPro" id="IPR029047">
    <property type="entry name" value="HSP70_peptide-bd_sf"/>
</dbReference>
<dbReference type="InterPro" id="IPR013126">
    <property type="entry name" value="Hsp_70_fam"/>
</dbReference>
<dbReference type="NCBIfam" id="NF001413">
    <property type="entry name" value="PRK00290.1"/>
    <property type="match status" value="1"/>
</dbReference>
<dbReference type="NCBIfam" id="TIGR02350">
    <property type="entry name" value="prok_dnaK"/>
    <property type="match status" value="1"/>
</dbReference>
<dbReference type="PANTHER" id="PTHR19375">
    <property type="entry name" value="HEAT SHOCK PROTEIN 70KDA"/>
    <property type="match status" value="1"/>
</dbReference>
<dbReference type="Pfam" id="PF00012">
    <property type="entry name" value="HSP70"/>
    <property type="match status" value="2"/>
</dbReference>
<dbReference type="PRINTS" id="PR00301">
    <property type="entry name" value="HEATSHOCK70"/>
</dbReference>
<dbReference type="SUPFAM" id="SSF53067">
    <property type="entry name" value="Actin-like ATPase domain"/>
    <property type="match status" value="2"/>
</dbReference>
<dbReference type="SUPFAM" id="SSF100934">
    <property type="entry name" value="Heat shock protein 70kD (HSP70), C-terminal subdomain"/>
    <property type="match status" value="1"/>
</dbReference>
<dbReference type="SUPFAM" id="SSF100920">
    <property type="entry name" value="Heat shock protein 70kD (HSP70), peptide-binding domain"/>
    <property type="match status" value="1"/>
</dbReference>
<dbReference type="PROSITE" id="PS00297">
    <property type="entry name" value="HSP70_1"/>
    <property type="match status" value="1"/>
</dbReference>
<dbReference type="PROSITE" id="PS00329">
    <property type="entry name" value="HSP70_2"/>
    <property type="match status" value="1"/>
</dbReference>
<dbReference type="PROSITE" id="PS01036">
    <property type="entry name" value="HSP70_3"/>
    <property type="match status" value="1"/>
</dbReference>
<sequence length="599" mass="65521">MAKEIILGIDLGTTNSVVSIIENKKPVVLENFNGKRTTPSVVAFKNGEIQVGEIAKRQLETNPDTIASIKRLMGTTKTVKANGKTYKPEEISAMILSHLKEYAEKKVGKKLTKAVITVPAYFDNSQREATKIAGKIAGLDVLRIINEPTAAALSFGLDKKEKEMKVLVYDLGGGTFDVSVLELENGTFEVLSTSGDNHLGGDDWDHVIVEWLTKEIKNRYDFDPSKDKMVMTRLKEAAEKAKIDLSAQMVAQITLPFLSVTSKGPINVDLELKRSEFEKMTTHLVDRTRKPIEDALREAKIKASDLSEVLLVGGSTRIPAVQSMVEHVLGKKPNRSINPDEVVAIGAAIQGGVLAGDINDVLLLDVTPLTLGIETLGGVATPLIPRNTTIPVTKSQVFSTAADNQSEVTISVVQGERPMASDNKQLGQFNLSGIEPAPRGVPQIEVSFSIDVNGITTVKAKDLKTNKEQEITIKNSSKLSDEEVEKMVKEAEENREADKAKKEKVEVIVRAESLISQLEKSLVDQGDKVDAKAKEETQKQIQELKDLIKDDKIEELKVKLEQIEQAAQAFAQYSAQQAATENSKDSDTVEAEIVDDKAN</sequence>
<comment type="function">
    <text evidence="1">Acts as a chaperone.</text>
</comment>
<comment type="induction">
    <text evidence="1">By stress conditions e.g. heat shock.</text>
</comment>
<comment type="similarity">
    <text evidence="1">Belongs to the heat shock protein 70 family.</text>
</comment>
<name>DNAK_MYCPU</name>
<proteinExistence type="inferred from homology"/>
<evidence type="ECO:0000255" key="1">
    <source>
        <dbReference type="HAMAP-Rule" id="MF_00332"/>
    </source>
</evidence>
<evidence type="ECO:0000256" key="2">
    <source>
        <dbReference type="SAM" id="MobiDB-lite"/>
    </source>
</evidence>
<accession>Q98QY7</accession>
<feature type="chain" id="PRO_0000078497" description="Chaperone protein DnaK">
    <location>
        <begin position="1"/>
        <end position="599"/>
    </location>
</feature>
<feature type="region of interest" description="Disordered" evidence="2">
    <location>
        <begin position="575"/>
        <end position="599"/>
    </location>
</feature>
<feature type="modified residue" description="Phosphothreonine; by autocatalysis" evidence="1">
    <location>
        <position position="187"/>
    </location>
</feature>